<protein>
    <recommendedName>
        <fullName evidence="1">tRNA-cytidine(32) 2-sulfurtransferase</fullName>
        <ecNumber evidence="1">2.8.1.-</ecNumber>
    </recommendedName>
    <alternativeName>
        <fullName evidence="1">Two-thiocytidine biosynthesis protein A</fullName>
    </alternativeName>
    <alternativeName>
        <fullName evidence="1">tRNA 2-thiocytidine biosynthesis protein TtcA</fullName>
    </alternativeName>
</protein>
<gene>
    <name evidence="1" type="primary">ttcA</name>
    <name type="ordered locus">Pcryo_0778</name>
</gene>
<feature type="chain" id="PRO_0000348807" description="tRNA-cytidine(32) 2-sulfurtransferase">
    <location>
        <begin position="1"/>
        <end position="381"/>
    </location>
</feature>
<feature type="short sequence motif" description="PP-loop motif" evidence="1">
    <location>
        <begin position="101"/>
        <end position="106"/>
    </location>
</feature>
<feature type="binding site" evidence="1">
    <location>
        <position position="176"/>
    </location>
    <ligand>
        <name>[4Fe-4S] cluster</name>
        <dbReference type="ChEBI" id="CHEBI:49883"/>
    </ligand>
</feature>
<feature type="binding site" evidence="1">
    <location>
        <position position="179"/>
    </location>
    <ligand>
        <name>[4Fe-4S] cluster</name>
        <dbReference type="ChEBI" id="CHEBI:49883"/>
    </ligand>
</feature>
<feature type="binding site" evidence="1">
    <location>
        <position position="267"/>
    </location>
    <ligand>
        <name>[4Fe-4S] cluster</name>
        <dbReference type="ChEBI" id="CHEBI:49883"/>
    </ligand>
</feature>
<name>TTCA_PSYCK</name>
<sequence>MTAATLFTPSITPQFDKASIDIDVNHHDKTTDIEQMLYDDVDDRNDDFMDEQADNILADTQSLTESVHFRKLQKKLRRQVSWAIRDFNMIEDGDVVMVCVSGGKDSYTLLDILLLLKRIAPIHFDIVAVNLDQKQPGYPEEVLPAYLNEQGIAHYILEKDTYSIVKSVVPEGKTYCSACSRLRRGSLYGFAKQIGATKIALGHHRDDMLATFFLNLFHGGALKSMPPKLLSDDKQNMLIRPLAYVEEKDIIEYSNLKEFPIIPCNLCGSQTNLQRAIINDMLREWDDAHPQRLASIFKAMQNVAPSQLADRELFDFETLSLDRDDNERLFEGDNIQAGQIESLAEIGLPVSPETQIFNPDFANAEKGSRAPKKIPTINPVI</sequence>
<proteinExistence type="inferred from homology"/>
<comment type="function">
    <text evidence="1">Catalyzes the ATP-dependent 2-thiolation of cytidine in position 32 of tRNA, to form 2-thiocytidine (s(2)C32). The sulfur atoms are provided by the cysteine/cysteine desulfurase (IscS) system.</text>
</comment>
<comment type="catalytic activity">
    <reaction evidence="1">
        <text>cytidine(32) in tRNA + S-sulfanyl-L-cysteinyl-[cysteine desulfurase] + AH2 + ATP = 2-thiocytidine(32) in tRNA + L-cysteinyl-[cysteine desulfurase] + A + AMP + diphosphate + H(+)</text>
        <dbReference type="Rhea" id="RHEA:57048"/>
        <dbReference type="Rhea" id="RHEA-COMP:10288"/>
        <dbReference type="Rhea" id="RHEA-COMP:12157"/>
        <dbReference type="Rhea" id="RHEA-COMP:12158"/>
        <dbReference type="Rhea" id="RHEA-COMP:14821"/>
        <dbReference type="ChEBI" id="CHEBI:13193"/>
        <dbReference type="ChEBI" id="CHEBI:15378"/>
        <dbReference type="ChEBI" id="CHEBI:17499"/>
        <dbReference type="ChEBI" id="CHEBI:29950"/>
        <dbReference type="ChEBI" id="CHEBI:30616"/>
        <dbReference type="ChEBI" id="CHEBI:33019"/>
        <dbReference type="ChEBI" id="CHEBI:61963"/>
        <dbReference type="ChEBI" id="CHEBI:82748"/>
        <dbReference type="ChEBI" id="CHEBI:141453"/>
        <dbReference type="ChEBI" id="CHEBI:456215"/>
    </reaction>
    <physiologicalReaction direction="left-to-right" evidence="1">
        <dbReference type="Rhea" id="RHEA:57049"/>
    </physiologicalReaction>
</comment>
<comment type="cofactor">
    <cofactor evidence="1">
        <name>Mg(2+)</name>
        <dbReference type="ChEBI" id="CHEBI:18420"/>
    </cofactor>
</comment>
<comment type="cofactor">
    <cofactor evidence="1">
        <name>[4Fe-4S] cluster</name>
        <dbReference type="ChEBI" id="CHEBI:49883"/>
    </cofactor>
    <text evidence="1">Binds 1 [4Fe-4S] cluster per subunit. The cluster is chelated by three Cys residues, the fourth Fe has a free coordination site that may bind a sulfur atom transferred from the persulfide of IscS.</text>
</comment>
<comment type="pathway">
    <text evidence="1">tRNA modification.</text>
</comment>
<comment type="subunit">
    <text evidence="1">Homodimer.</text>
</comment>
<comment type="subcellular location">
    <subcellularLocation>
        <location evidence="1">Cytoplasm</location>
    </subcellularLocation>
</comment>
<comment type="miscellaneous">
    <text evidence="1">The thiolation reaction likely consists of two steps: a first activation step by ATP to form an adenylated intermediate of the target base of tRNA, and a second nucleophilic substitution step of the sulfur (S) atom supplied by the hydrosulfide attached to the Fe-S cluster.</text>
</comment>
<comment type="similarity">
    <text evidence="1">Belongs to the TtcA family.</text>
</comment>
<evidence type="ECO:0000255" key="1">
    <source>
        <dbReference type="HAMAP-Rule" id="MF_01850"/>
    </source>
</evidence>
<organism>
    <name type="scientific">Psychrobacter cryohalolentis (strain ATCC BAA-1226 / DSM 17306 / VKM B-2378 / K5)</name>
    <dbReference type="NCBI Taxonomy" id="335284"/>
    <lineage>
        <taxon>Bacteria</taxon>
        <taxon>Pseudomonadati</taxon>
        <taxon>Pseudomonadota</taxon>
        <taxon>Gammaproteobacteria</taxon>
        <taxon>Moraxellales</taxon>
        <taxon>Moraxellaceae</taxon>
        <taxon>Psychrobacter</taxon>
    </lineage>
</organism>
<reference key="1">
    <citation type="submission" date="2006-03" db="EMBL/GenBank/DDBJ databases">
        <title>Complete sequence of chromosome of Psychrobacter cryohalolentis K5.</title>
        <authorList>
            <consortium name="US DOE Joint Genome Institute"/>
            <person name="Copeland A."/>
            <person name="Lucas S."/>
            <person name="Lapidus A."/>
            <person name="Barry K."/>
            <person name="Detter J.C."/>
            <person name="Glavina T."/>
            <person name="Hammon N."/>
            <person name="Israni S."/>
            <person name="Dalin E."/>
            <person name="Tice H."/>
            <person name="Pitluck S."/>
            <person name="Brettin T."/>
            <person name="Bruce D."/>
            <person name="Han C."/>
            <person name="Tapia R."/>
            <person name="Sims D.R."/>
            <person name="Gilna P."/>
            <person name="Schmutz J."/>
            <person name="Larimer F."/>
            <person name="Land M."/>
            <person name="Hauser L."/>
            <person name="Kyrpides N."/>
            <person name="Kim E."/>
            <person name="Richardson P."/>
        </authorList>
    </citation>
    <scope>NUCLEOTIDE SEQUENCE [LARGE SCALE GENOMIC DNA]</scope>
    <source>
        <strain>ATCC BAA-1226 / DSM 17306 / VKM B-2378 / K5</strain>
    </source>
</reference>
<accession>Q1QCP2</accession>
<dbReference type="EC" id="2.8.1.-" evidence="1"/>
<dbReference type="EMBL" id="CP000323">
    <property type="protein sequence ID" value="ABE74561.1"/>
    <property type="molecule type" value="Genomic_DNA"/>
</dbReference>
<dbReference type="RefSeq" id="WP_011513125.1">
    <property type="nucleotide sequence ID" value="NC_007969.1"/>
</dbReference>
<dbReference type="SMR" id="Q1QCP2"/>
<dbReference type="STRING" id="335284.Pcryo_0778"/>
<dbReference type="KEGG" id="pcr:Pcryo_0778"/>
<dbReference type="eggNOG" id="COG0037">
    <property type="taxonomic scope" value="Bacteria"/>
</dbReference>
<dbReference type="HOGENOM" id="CLU_026481_3_0_6"/>
<dbReference type="Proteomes" id="UP000002425">
    <property type="component" value="Chromosome"/>
</dbReference>
<dbReference type="GO" id="GO:0005737">
    <property type="term" value="C:cytoplasm"/>
    <property type="evidence" value="ECO:0007669"/>
    <property type="project" value="UniProtKB-SubCell"/>
</dbReference>
<dbReference type="GO" id="GO:0051539">
    <property type="term" value="F:4 iron, 4 sulfur cluster binding"/>
    <property type="evidence" value="ECO:0007669"/>
    <property type="project" value="UniProtKB-UniRule"/>
</dbReference>
<dbReference type="GO" id="GO:0005524">
    <property type="term" value="F:ATP binding"/>
    <property type="evidence" value="ECO:0007669"/>
    <property type="project" value="UniProtKB-UniRule"/>
</dbReference>
<dbReference type="GO" id="GO:0000287">
    <property type="term" value="F:magnesium ion binding"/>
    <property type="evidence" value="ECO:0007669"/>
    <property type="project" value="UniProtKB-UniRule"/>
</dbReference>
<dbReference type="GO" id="GO:0016783">
    <property type="term" value="F:sulfurtransferase activity"/>
    <property type="evidence" value="ECO:0007669"/>
    <property type="project" value="UniProtKB-UniRule"/>
</dbReference>
<dbReference type="GO" id="GO:0000049">
    <property type="term" value="F:tRNA binding"/>
    <property type="evidence" value="ECO:0007669"/>
    <property type="project" value="UniProtKB-KW"/>
</dbReference>
<dbReference type="GO" id="GO:0034227">
    <property type="term" value="P:tRNA thio-modification"/>
    <property type="evidence" value="ECO:0007669"/>
    <property type="project" value="UniProtKB-UniRule"/>
</dbReference>
<dbReference type="CDD" id="cd24138">
    <property type="entry name" value="TtcA-like"/>
    <property type="match status" value="1"/>
</dbReference>
<dbReference type="Gene3D" id="3.40.50.620">
    <property type="entry name" value="HUPs"/>
    <property type="match status" value="1"/>
</dbReference>
<dbReference type="HAMAP" id="MF_01850">
    <property type="entry name" value="TtcA"/>
    <property type="match status" value="1"/>
</dbReference>
<dbReference type="InterPro" id="IPR014729">
    <property type="entry name" value="Rossmann-like_a/b/a_fold"/>
</dbReference>
<dbReference type="InterPro" id="IPR011063">
    <property type="entry name" value="TilS/TtcA_N"/>
</dbReference>
<dbReference type="InterPro" id="IPR012089">
    <property type="entry name" value="tRNA_Cyd_32_2_STrfase"/>
</dbReference>
<dbReference type="NCBIfam" id="NF007972">
    <property type="entry name" value="PRK10696.1"/>
    <property type="match status" value="1"/>
</dbReference>
<dbReference type="PANTHER" id="PTHR43686:SF1">
    <property type="entry name" value="AMINOTRAN_5 DOMAIN-CONTAINING PROTEIN"/>
    <property type="match status" value="1"/>
</dbReference>
<dbReference type="PANTHER" id="PTHR43686">
    <property type="entry name" value="SULFURTRANSFERASE-RELATED"/>
    <property type="match status" value="1"/>
</dbReference>
<dbReference type="Pfam" id="PF01171">
    <property type="entry name" value="ATP_bind_3"/>
    <property type="match status" value="1"/>
</dbReference>
<dbReference type="SUPFAM" id="SSF52402">
    <property type="entry name" value="Adenine nucleotide alpha hydrolases-like"/>
    <property type="match status" value="1"/>
</dbReference>
<keyword id="KW-0004">4Fe-4S</keyword>
<keyword id="KW-0067">ATP-binding</keyword>
<keyword id="KW-0963">Cytoplasm</keyword>
<keyword id="KW-0408">Iron</keyword>
<keyword id="KW-0411">Iron-sulfur</keyword>
<keyword id="KW-0460">Magnesium</keyword>
<keyword id="KW-0479">Metal-binding</keyword>
<keyword id="KW-0547">Nucleotide-binding</keyword>
<keyword id="KW-0694">RNA-binding</keyword>
<keyword id="KW-0808">Transferase</keyword>
<keyword id="KW-0819">tRNA processing</keyword>
<keyword id="KW-0820">tRNA-binding</keyword>